<accession>P08257</accession>
<feature type="chain" id="PRO_0000052831" description="Hemoglobin subunit alpha-D/D'">
    <location>
        <begin position="1"/>
        <end position="141"/>
    </location>
</feature>
<feature type="domain" description="Globin" evidence="1">
    <location>
        <begin position="1"/>
        <end position="141"/>
    </location>
</feature>
<feature type="binding site" description="distal binding residue">
    <location>
        <position position="58"/>
    </location>
    <ligand>
        <name>heme b</name>
        <dbReference type="ChEBI" id="CHEBI:60344"/>
    </ligand>
    <ligandPart>
        <name>Fe</name>
        <dbReference type="ChEBI" id="CHEBI:18248"/>
    </ligandPart>
</feature>
<feature type="binding site" description="proximal binding residue">
    <location>
        <position position="87"/>
    </location>
    <ligand>
        <name>heme b</name>
        <dbReference type="ChEBI" id="CHEBI:60344"/>
    </ligand>
    <ligandPart>
        <name>Fe</name>
        <dbReference type="ChEBI" id="CHEBI:18248"/>
    </ligandPart>
</feature>
<feature type="sequence variant" description="In alpha-D'.">
    <original>C</original>
    <variation>N</variation>
    <location>
        <position position="104"/>
    </location>
</feature>
<comment type="function">
    <text>Involved in oxygen transport from the lung to the various peripheral tissues.</text>
</comment>
<comment type="subunit">
    <text>Heterotetramer of two alpha-D chains and two beta chains.</text>
</comment>
<comment type="tissue specificity">
    <text>Red blood cells.</text>
</comment>
<comment type="developmental stage">
    <text>In birds, the alpha-D chain occurs in a minor hemoglobin component, called hemoglobin d, which is expressed in late embryonic and adult life.</text>
</comment>
<comment type="miscellaneous">
    <text>The sequence shown is that of alpha-D.</text>
</comment>
<comment type="similarity">
    <text evidence="1">Belongs to the globin family.</text>
</comment>
<organism>
    <name type="scientific">Gyps rueppelli</name>
    <name type="common">Rueppell's griffon</name>
    <name type="synonym">Vultur rueppellii</name>
    <dbReference type="NCBI Taxonomy" id="8967"/>
    <lineage>
        <taxon>Eukaryota</taxon>
        <taxon>Metazoa</taxon>
        <taxon>Chordata</taxon>
        <taxon>Craniata</taxon>
        <taxon>Vertebrata</taxon>
        <taxon>Euteleostomi</taxon>
        <taxon>Archelosauria</taxon>
        <taxon>Archosauria</taxon>
        <taxon>Dinosauria</taxon>
        <taxon>Saurischia</taxon>
        <taxon>Theropoda</taxon>
        <taxon>Coelurosauria</taxon>
        <taxon>Aves</taxon>
        <taxon>Neognathae</taxon>
        <taxon>Neoaves</taxon>
        <taxon>Telluraves</taxon>
        <taxon>Accipitrimorphae</taxon>
        <taxon>Accipitriformes</taxon>
        <taxon>Accipitridae</taxon>
        <taxon>Accipitrinae</taxon>
        <taxon>Gyps</taxon>
    </lineage>
</organism>
<evidence type="ECO:0000255" key="1">
    <source>
        <dbReference type="PROSITE-ProRule" id="PRU00238"/>
    </source>
</evidence>
<sequence length="141" mass="15826">MLTADDKKLIQTTWDKVQGHQEDFGAEALQRMFITYPQTKTYFPHFDLSPGSDQVRGHGKKVVNALGNAVKSMDNLSQALSELSNLHAYNLRVDPVNFKLLSQCFQVVLAVHLGKEYTPEVHSAFDKFLSAVAAVLAEKYR</sequence>
<reference key="1">
    <citation type="journal article" date="1988" name="Biol. Chem. Hoppe-Seyler">
        <title>High-altitude respiration of birds. Structural adaptations in the major and minor hemoglobin components of adult Ruppell's Griffon (Gyps rueppellii, Aegypiinae): a new molecular pattern for hypoxic tolerance.</title>
        <authorList>
            <person name="Hiebl I."/>
            <person name="Weber R.E."/>
            <person name="Schneeganss D."/>
            <person name="Kosters J."/>
            <person name="Braunitzer G."/>
        </authorList>
    </citation>
    <scope>PROTEIN SEQUENCE</scope>
</reference>
<keyword id="KW-0903">Direct protein sequencing</keyword>
<keyword id="KW-0349">Heme</keyword>
<keyword id="KW-0408">Iron</keyword>
<keyword id="KW-0479">Metal-binding</keyword>
<keyword id="KW-0561">Oxygen transport</keyword>
<keyword id="KW-0813">Transport</keyword>
<gene>
    <name type="primary">HBAD</name>
</gene>
<protein>
    <recommendedName>
        <fullName>Hemoglobin subunit alpha-D/D'</fullName>
    </recommendedName>
    <alternativeName>
        <fullName>Alpha-D/D'-globin</fullName>
    </alternativeName>
    <alternativeName>
        <fullName>Hemoglobin alpha-D/D' chain</fullName>
    </alternativeName>
</protein>
<name>HBAD_GYPRU</name>
<proteinExistence type="evidence at protein level"/>
<dbReference type="PIR" id="S01195">
    <property type="entry name" value="HAGRDR"/>
</dbReference>
<dbReference type="SMR" id="P08257"/>
<dbReference type="GO" id="GO:0072562">
    <property type="term" value="C:blood microparticle"/>
    <property type="evidence" value="ECO:0007669"/>
    <property type="project" value="TreeGrafter"/>
</dbReference>
<dbReference type="GO" id="GO:0031838">
    <property type="term" value="C:haptoglobin-hemoglobin complex"/>
    <property type="evidence" value="ECO:0007669"/>
    <property type="project" value="TreeGrafter"/>
</dbReference>
<dbReference type="GO" id="GO:0005833">
    <property type="term" value="C:hemoglobin complex"/>
    <property type="evidence" value="ECO:0007669"/>
    <property type="project" value="InterPro"/>
</dbReference>
<dbReference type="GO" id="GO:0031720">
    <property type="term" value="F:haptoglobin binding"/>
    <property type="evidence" value="ECO:0007669"/>
    <property type="project" value="TreeGrafter"/>
</dbReference>
<dbReference type="GO" id="GO:0020037">
    <property type="term" value="F:heme binding"/>
    <property type="evidence" value="ECO:0007669"/>
    <property type="project" value="InterPro"/>
</dbReference>
<dbReference type="GO" id="GO:0005506">
    <property type="term" value="F:iron ion binding"/>
    <property type="evidence" value="ECO:0007669"/>
    <property type="project" value="InterPro"/>
</dbReference>
<dbReference type="GO" id="GO:0043177">
    <property type="term" value="F:organic acid binding"/>
    <property type="evidence" value="ECO:0007669"/>
    <property type="project" value="TreeGrafter"/>
</dbReference>
<dbReference type="GO" id="GO:0019825">
    <property type="term" value="F:oxygen binding"/>
    <property type="evidence" value="ECO:0007669"/>
    <property type="project" value="InterPro"/>
</dbReference>
<dbReference type="GO" id="GO:0005344">
    <property type="term" value="F:oxygen carrier activity"/>
    <property type="evidence" value="ECO:0007669"/>
    <property type="project" value="UniProtKB-KW"/>
</dbReference>
<dbReference type="GO" id="GO:0004601">
    <property type="term" value="F:peroxidase activity"/>
    <property type="evidence" value="ECO:0007669"/>
    <property type="project" value="TreeGrafter"/>
</dbReference>
<dbReference type="GO" id="GO:0042744">
    <property type="term" value="P:hydrogen peroxide catabolic process"/>
    <property type="evidence" value="ECO:0007669"/>
    <property type="project" value="TreeGrafter"/>
</dbReference>
<dbReference type="CDD" id="cd08927">
    <property type="entry name" value="Hb-alpha-like"/>
    <property type="match status" value="1"/>
</dbReference>
<dbReference type="FunFam" id="1.10.490.10:FF:000002">
    <property type="entry name" value="Hemoglobin subunit alpha"/>
    <property type="match status" value="1"/>
</dbReference>
<dbReference type="Gene3D" id="1.10.490.10">
    <property type="entry name" value="Globins"/>
    <property type="match status" value="1"/>
</dbReference>
<dbReference type="InterPro" id="IPR000971">
    <property type="entry name" value="Globin"/>
</dbReference>
<dbReference type="InterPro" id="IPR009050">
    <property type="entry name" value="Globin-like_sf"/>
</dbReference>
<dbReference type="InterPro" id="IPR012292">
    <property type="entry name" value="Globin/Proto"/>
</dbReference>
<dbReference type="InterPro" id="IPR002338">
    <property type="entry name" value="Hemoglobin_a-typ"/>
</dbReference>
<dbReference type="InterPro" id="IPR050056">
    <property type="entry name" value="Hemoglobin_oxygen_transport"/>
</dbReference>
<dbReference type="InterPro" id="IPR002339">
    <property type="entry name" value="Hemoglobin_pi"/>
</dbReference>
<dbReference type="PANTHER" id="PTHR11442">
    <property type="entry name" value="HEMOGLOBIN FAMILY MEMBER"/>
    <property type="match status" value="1"/>
</dbReference>
<dbReference type="PANTHER" id="PTHR11442:SF41">
    <property type="entry name" value="HEMOGLOBIN SUBUNIT ZETA"/>
    <property type="match status" value="1"/>
</dbReference>
<dbReference type="Pfam" id="PF00042">
    <property type="entry name" value="Globin"/>
    <property type="match status" value="1"/>
</dbReference>
<dbReference type="PRINTS" id="PR00612">
    <property type="entry name" value="ALPHAHAEM"/>
</dbReference>
<dbReference type="PRINTS" id="PR00815">
    <property type="entry name" value="PIHAEM"/>
</dbReference>
<dbReference type="SUPFAM" id="SSF46458">
    <property type="entry name" value="Globin-like"/>
    <property type="match status" value="1"/>
</dbReference>
<dbReference type="PROSITE" id="PS01033">
    <property type="entry name" value="GLOBIN"/>
    <property type="match status" value="1"/>
</dbReference>